<sequence>MTRQHFGTDGIRGTVGQPPITPDFVLRLAHAVGRVLRQTQERPVVLIGKDTRISGYMLESALESGFNSAGVDVVLLGPLPTPGVAYLTCAQRASLGVVISASHNPYPDNGIKFFSAQGSKLSDAWEQAVETALGEPPAWTNSANLGKARRLNDAAERYIEFCKNTFAQDLSLKGLKIVLDAAHGAAYQVGPKVLRELEAEVIAIGCSPDGLNINHEVGATHPDTLVRAVHAHHADYGIALDGDADRVLIVDATGRLYNGDELLYLMVADRMGRDEHVPGVVGTLMTNRAVELALQARGVEFVRAKVGDRYILEELTRRDWALGGEGSGHLLALDRHTTGDGIGSALQVLQACVRSRSTLAQLLAAVTLYPQVLLNVRLPPDQDWTTNRLLADAIQAVEQQLGASGRVLIRASGTEPLLRVMVEARDAQLADSCAQRLANAARAGWQGHTSLKNAPPMGAN</sequence>
<name>GLMM_VEREI</name>
<evidence type="ECO:0000255" key="1">
    <source>
        <dbReference type="HAMAP-Rule" id="MF_01554"/>
    </source>
</evidence>
<gene>
    <name evidence="1" type="primary">glmM</name>
    <name type="ordered locus">Veis_0209</name>
</gene>
<organism>
    <name type="scientific">Verminephrobacter eiseniae (strain EF01-2)</name>
    <dbReference type="NCBI Taxonomy" id="391735"/>
    <lineage>
        <taxon>Bacteria</taxon>
        <taxon>Pseudomonadati</taxon>
        <taxon>Pseudomonadota</taxon>
        <taxon>Betaproteobacteria</taxon>
        <taxon>Burkholderiales</taxon>
        <taxon>Comamonadaceae</taxon>
        <taxon>Verminephrobacter</taxon>
    </lineage>
</organism>
<comment type="function">
    <text evidence="1">Catalyzes the conversion of glucosamine-6-phosphate to glucosamine-1-phosphate.</text>
</comment>
<comment type="catalytic activity">
    <reaction evidence="1">
        <text>alpha-D-glucosamine 1-phosphate = D-glucosamine 6-phosphate</text>
        <dbReference type="Rhea" id="RHEA:23424"/>
        <dbReference type="ChEBI" id="CHEBI:58516"/>
        <dbReference type="ChEBI" id="CHEBI:58725"/>
        <dbReference type="EC" id="5.4.2.10"/>
    </reaction>
</comment>
<comment type="cofactor">
    <cofactor evidence="1">
        <name>Mg(2+)</name>
        <dbReference type="ChEBI" id="CHEBI:18420"/>
    </cofactor>
    <text evidence="1">Binds 1 Mg(2+) ion per subunit.</text>
</comment>
<comment type="PTM">
    <text evidence="1">Activated by phosphorylation.</text>
</comment>
<comment type="similarity">
    <text evidence="1">Belongs to the phosphohexose mutase family.</text>
</comment>
<reference key="1">
    <citation type="submission" date="2006-12" db="EMBL/GenBank/DDBJ databases">
        <title>Complete sequence of chromosome 1 of Verminephrobacter eiseniae EF01-2.</title>
        <authorList>
            <person name="Copeland A."/>
            <person name="Lucas S."/>
            <person name="Lapidus A."/>
            <person name="Barry K."/>
            <person name="Detter J.C."/>
            <person name="Glavina del Rio T."/>
            <person name="Dalin E."/>
            <person name="Tice H."/>
            <person name="Pitluck S."/>
            <person name="Chertkov O."/>
            <person name="Brettin T."/>
            <person name="Bruce D."/>
            <person name="Han C."/>
            <person name="Tapia R."/>
            <person name="Gilna P."/>
            <person name="Schmutz J."/>
            <person name="Larimer F."/>
            <person name="Land M."/>
            <person name="Hauser L."/>
            <person name="Kyrpides N."/>
            <person name="Kim E."/>
            <person name="Stahl D."/>
            <person name="Richardson P."/>
        </authorList>
    </citation>
    <scope>NUCLEOTIDE SEQUENCE [LARGE SCALE GENOMIC DNA]</scope>
    <source>
        <strain>EF01-2</strain>
    </source>
</reference>
<proteinExistence type="inferred from homology"/>
<protein>
    <recommendedName>
        <fullName evidence="1">Phosphoglucosamine mutase</fullName>
        <ecNumber evidence="1">5.4.2.10</ecNumber>
    </recommendedName>
</protein>
<feature type="chain" id="PRO_0000301401" description="Phosphoglucosamine mutase">
    <location>
        <begin position="1"/>
        <end position="460"/>
    </location>
</feature>
<feature type="active site" description="Phosphoserine intermediate" evidence="1">
    <location>
        <position position="102"/>
    </location>
</feature>
<feature type="binding site" description="via phosphate group" evidence="1">
    <location>
        <position position="102"/>
    </location>
    <ligand>
        <name>Mg(2+)</name>
        <dbReference type="ChEBI" id="CHEBI:18420"/>
    </ligand>
</feature>
<feature type="binding site" evidence="1">
    <location>
        <position position="241"/>
    </location>
    <ligand>
        <name>Mg(2+)</name>
        <dbReference type="ChEBI" id="CHEBI:18420"/>
    </ligand>
</feature>
<feature type="binding site" evidence="1">
    <location>
        <position position="243"/>
    </location>
    <ligand>
        <name>Mg(2+)</name>
        <dbReference type="ChEBI" id="CHEBI:18420"/>
    </ligand>
</feature>
<feature type="binding site" evidence="1">
    <location>
        <position position="245"/>
    </location>
    <ligand>
        <name>Mg(2+)</name>
        <dbReference type="ChEBI" id="CHEBI:18420"/>
    </ligand>
</feature>
<feature type="modified residue" description="Phosphoserine" evidence="1">
    <location>
        <position position="102"/>
    </location>
</feature>
<accession>A1WEE4</accession>
<keyword id="KW-0413">Isomerase</keyword>
<keyword id="KW-0460">Magnesium</keyword>
<keyword id="KW-0479">Metal-binding</keyword>
<keyword id="KW-0597">Phosphoprotein</keyword>
<keyword id="KW-1185">Reference proteome</keyword>
<dbReference type="EC" id="5.4.2.10" evidence="1"/>
<dbReference type="EMBL" id="CP000542">
    <property type="protein sequence ID" value="ABM56001.1"/>
    <property type="molecule type" value="Genomic_DNA"/>
</dbReference>
<dbReference type="RefSeq" id="WP_011808020.1">
    <property type="nucleotide sequence ID" value="NC_008786.1"/>
</dbReference>
<dbReference type="SMR" id="A1WEE4"/>
<dbReference type="STRING" id="391735.Veis_0209"/>
<dbReference type="GeneID" id="76458955"/>
<dbReference type="KEGG" id="vei:Veis_0209"/>
<dbReference type="eggNOG" id="COG1109">
    <property type="taxonomic scope" value="Bacteria"/>
</dbReference>
<dbReference type="HOGENOM" id="CLU_016950_7_0_4"/>
<dbReference type="OrthoDB" id="9803322at2"/>
<dbReference type="Proteomes" id="UP000000374">
    <property type="component" value="Chromosome"/>
</dbReference>
<dbReference type="GO" id="GO:0005829">
    <property type="term" value="C:cytosol"/>
    <property type="evidence" value="ECO:0007669"/>
    <property type="project" value="TreeGrafter"/>
</dbReference>
<dbReference type="GO" id="GO:0000287">
    <property type="term" value="F:magnesium ion binding"/>
    <property type="evidence" value="ECO:0007669"/>
    <property type="project" value="UniProtKB-UniRule"/>
</dbReference>
<dbReference type="GO" id="GO:0008966">
    <property type="term" value="F:phosphoglucosamine mutase activity"/>
    <property type="evidence" value="ECO:0007669"/>
    <property type="project" value="UniProtKB-UniRule"/>
</dbReference>
<dbReference type="GO" id="GO:0004615">
    <property type="term" value="F:phosphomannomutase activity"/>
    <property type="evidence" value="ECO:0007669"/>
    <property type="project" value="TreeGrafter"/>
</dbReference>
<dbReference type="GO" id="GO:0005975">
    <property type="term" value="P:carbohydrate metabolic process"/>
    <property type="evidence" value="ECO:0007669"/>
    <property type="project" value="InterPro"/>
</dbReference>
<dbReference type="GO" id="GO:0009252">
    <property type="term" value="P:peptidoglycan biosynthetic process"/>
    <property type="evidence" value="ECO:0007669"/>
    <property type="project" value="TreeGrafter"/>
</dbReference>
<dbReference type="GO" id="GO:0006048">
    <property type="term" value="P:UDP-N-acetylglucosamine biosynthetic process"/>
    <property type="evidence" value="ECO:0007669"/>
    <property type="project" value="TreeGrafter"/>
</dbReference>
<dbReference type="CDD" id="cd05802">
    <property type="entry name" value="GlmM"/>
    <property type="match status" value="1"/>
</dbReference>
<dbReference type="FunFam" id="3.30.310.50:FF:000001">
    <property type="entry name" value="Phosphoglucosamine mutase"/>
    <property type="match status" value="1"/>
</dbReference>
<dbReference type="FunFam" id="3.40.120.10:FF:000001">
    <property type="entry name" value="Phosphoglucosamine mutase"/>
    <property type="match status" value="1"/>
</dbReference>
<dbReference type="FunFam" id="3.40.120.10:FF:000003">
    <property type="entry name" value="Phosphoglucosamine mutase"/>
    <property type="match status" value="1"/>
</dbReference>
<dbReference type="Gene3D" id="3.40.120.10">
    <property type="entry name" value="Alpha-D-Glucose-1,6-Bisphosphate, subunit A, domain 3"/>
    <property type="match status" value="3"/>
</dbReference>
<dbReference type="Gene3D" id="3.30.310.50">
    <property type="entry name" value="Alpha-D-phosphohexomutase, C-terminal domain"/>
    <property type="match status" value="1"/>
</dbReference>
<dbReference type="HAMAP" id="MF_01554_B">
    <property type="entry name" value="GlmM_B"/>
    <property type="match status" value="1"/>
</dbReference>
<dbReference type="InterPro" id="IPR005844">
    <property type="entry name" value="A-D-PHexomutase_a/b/a-I"/>
</dbReference>
<dbReference type="InterPro" id="IPR016055">
    <property type="entry name" value="A-D-PHexomutase_a/b/a-I/II/III"/>
</dbReference>
<dbReference type="InterPro" id="IPR005845">
    <property type="entry name" value="A-D-PHexomutase_a/b/a-II"/>
</dbReference>
<dbReference type="InterPro" id="IPR005846">
    <property type="entry name" value="A-D-PHexomutase_a/b/a-III"/>
</dbReference>
<dbReference type="InterPro" id="IPR005843">
    <property type="entry name" value="A-D-PHexomutase_C"/>
</dbReference>
<dbReference type="InterPro" id="IPR036900">
    <property type="entry name" value="A-D-PHexomutase_C_sf"/>
</dbReference>
<dbReference type="InterPro" id="IPR016066">
    <property type="entry name" value="A-D-PHexomutase_CS"/>
</dbReference>
<dbReference type="InterPro" id="IPR005841">
    <property type="entry name" value="Alpha-D-phosphohexomutase_SF"/>
</dbReference>
<dbReference type="InterPro" id="IPR006352">
    <property type="entry name" value="GlmM_bact"/>
</dbReference>
<dbReference type="InterPro" id="IPR050060">
    <property type="entry name" value="Phosphoglucosamine_mutase"/>
</dbReference>
<dbReference type="NCBIfam" id="TIGR01455">
    <property type="entry name" value="glmM"/>
    <property type="match status" value="1"/>
</dbReference>
<dbReference type="NCBIfam" id="NF008139">
    <property type="entry name" value="PRK10887.1"/>
    <property type="match status" value="1"/>
</dbReference>
<dbReference type="PANTHER" id="PTHR42946:SF1">
    <property type="entry name" value="PHOSPHOGLUCOMUTASE (ALPHA-D-GLUCOSE-1,6-BISPHOSPHATE-DEPENDENT)"/>
    <property type="match status" value="1"/>
</dbReference>
<dbReference type="PANTHER" id="PTHR42946">
    <property type="entry name" value="PHOSPHOHEXOSE MUTASE"/>
    <property type="match status" value="1"/>
</dbReference>
<dbReference type="Pfam" id="PF02878">
    <property type="entry name" value="PGM_PMM_I"/>
    <property type="match status" value="1"/>
</dbReference>
<dbReference type="Pfam" id="PF02879">
    <property type="entry name" value="PGM_PMM_II"/>
    <property type="match status" value="1"/>
</dbReference>
<dbReference type="Pfam" id="PF02880">
    <property type="entry name" value="PGM_PMM_III"/>
    <property type="match status" value="1"/>
</dbReference>
<dbReference type="Pfam" id="PF00408">
    <property type="entry name" value="PGM_PMM_IV"/>
    <property type="match status" value="1"/>
</dbReference>
<dbReference type="PRINTS" id="PR00509">
    <property type="entry name" value="PGMPMM"/>
</dbReference>
<dbReference type="SUPFAM" id="SSF55957">
    <property type="entry name" value="Phosphoglucomutase, C-terminal domain"/>
    <property type="match status" value="1"/>
</dbReference>
<dbReference type="SUPFAM" id="SSF53738">
    <property type="entry name" value="Phosphoglucomutase, first 3 domains"/>
    <property type="match status" value="3"/>
</dbReference>
<dbReference type="PROSITE" id="PS00710">
    <property type="entry name" value="PGM_PMM"/>
    <property type="match status" value="1"/>
</dbReference>